<feature type="chain" id="PRO_0000295707" description="UPF0461 protein C5orf24 homolog">
    <location>
        <begin position="1"/>
        <end position="188"/>
    </location>
</feature>
<feature type="region of interest" description="Disordered" evidence="2">
    <location>
        <begin position="79"/>
        <end position="142"/>
    </location>
</feature>
<feature type="compositionally biased region" description="Basic residues" evidence="2">
    <location>
        <begin position="80"/>
        <end position="92"/>
    </location>
</feature>
<feature type="compositionally biased region" description="Polar residues" evidence="2">
    <location>
        <begin position="94"/>
        <end position="107"/>
    </location>
</feature>
<feature type="modified residue" description="Phosphoserine" evidence="1">
    <location>
        <position position="37"/>
    </location>
</feature>
<feature type="modified residue" description="Phosphoserine" evidence="1">
    <location>
        <position position="121"/>
    </location>
</feature>
<feature type="modified residue" description="Phosphoserine" evidence="1">
    <location>
        <position position="180"/>
    </location>
</feature>
<feature type="cross-link" description="Glycyl lysine isopeptide (Lys-Gly) (interchain with G-Cter in SUMO2)" evidence="1">
    <location>
        <position position="75"/>
    </location>
</feature>
<feature type="cross-link" description="Glycyl lysine isopeptide (Lys-Gly) (interchain with G-Cter in SUMO2)" evidence="1">
    <location>
        <position position="184"/>
    </location>
</feature>
<protein>
    <recommendedName>
        <fullName>UPF0461 protein C5orf24 homolog</fullName>
    </recommendedName>
</protein>
<keyword id="KW-1017">Isopeptide bond</keyword>
<keyword id="KW-0597">Phosphoprotein</keyword>
<keyword id="KW-1185">Reference proteome</keyword>
<keyword id="KW-0832">Ubl conjugation</keyword>
<accession>Q0II29</accession>
<organism>
    <name type="scientific">Bos taurus</name>
    <name type="common">Bovine</name>
    <dbReference type="NCBI Taxonomy" id="9913"/>
    <lineage>
        <taxon>Eukaryota</taxon>
        <taxon>Metazoa</taxon>
        <taxon>Chordata</taxon>
        <taxon>Craniata</taxon>
        <taxon>Vertebrata</taxon>
        <taxon>Euteleostomi</taxon>
        <taxon>Mammalia</taxon>
        <taxon>Eutheria</taxon>
        <taxon>Laurasiatheria</taxon>
        <taxon>Artiodactyla</taxon>
        <taxon>Ruminantia</taxon>
        <taxon>Pecora</taxon>
        <taxon>Bovidae</taxon>
        <taxon>Bovinae</taxon>
        <taxon>Bos</taxon>
    </lineage>
</organism>
<reference key="1">
    <citation type="submission" date="2006-08" db="EMBL/GenBank/DDBJ databases">
        <authorList>
            <consortium name="NIH - Mammalian Gene Collection (MGC) project"/>
        </authorList>
    </citation>
    <scope>NUCLEOTIDE SEQUENCE [LARGE SCALE MRNA]</scope>
    <source>
        <strain>Hereford</strain>
        <tissue>Hypothalamus</tissue>
    </source>
</reference>
<sequence>MMHPVASSNPAFCGPGKPSCLNEDAMRAADQFDIYSSQQNKYSHTVSHKPMVCQRQDPLNETHLQTAGGRSIEIKDELKKKKNLNRSGKRGRPSGTTKSAGYRTSTGRPLGTTKAAGFKTSPGRPLGTTKAAGYKVSPGRPPGSIKALSRLADLGYGCGTAAFPYPMIHGRAVHGVEETSSEIKPPNE</sequence>
<proteinExistence type="evidence at transcript level"/>
<comment type="similarity">
    <text evidence="3">Belongs to the UPF0461 family.</text>
</comment>
<evidence type="ECO:0000250" key="1">
    <source>
        <dbReference type="UniProtKB" id="Q7Z6I8"/>
    </source>
</evidence>
<evidence type="ECO:0000256" key="2">
    <source>
        <dbReference type="SAM" id="MobiDB-lite"/>
    </source>
</evidence>
<evidence type="ECO:0000305" key="3"/>
<name>CE024_BOVIN</name>
<dbReference type="EMBL" id="BC122833">
    <property type="protein sequence ID" value="AAI22834.1"/>
    <property type="molecule type" value="mRNA"/>
</dbReference>
<dbReference type="RefSeq" id="NP_001069578.1">
    <property type="nucleotide sequence ID" value="NM_001076110.1"/>
</dbReference>
<dbReference type="FunCoup" id="Q0II29">
    <property type="interactions" value="2582"/>
</dbReference>
<dbReference type="STRING" id="9913.ENSBTAP00000016958"/>
<dbReference type="PaxDb" id="9913-ENSBTAP00000016958"/>
<dbReference type="Ensembl" id="ENSBTAT00000016958.5">
    <property type="protein sequence ID" value="ENSBTAP00000016958.3"/>
    <property type="gene ID" value="ENSBTAG00000012762.5"/>
</dbReference>
<dbReference type="Ensembl" id="ENSBTAT00000135115.1">
    <property type="protein sequence ID" value="ENSBTAP00000081326.1"/>
    <property type="gene ID" value="ENSBTAG00000012762.5"/>
</dbReference>
<dbReference type="GeneID" id="538535"/>
<dbReference type="KEGG" id="bta:538535"/>
<dbReference type="CTD" id="538535"/>
<dbReference type="VEuPathDB" id="HostDB:ENSBTAG00000012762"/>
<dbReference type="VGNC" id="VGNC:52733">
    <property type="gene designation" value="C7H5orf24"/>
</dbReference>
<dbReference type="eggNOG" id="ENOG502RZTV">
    <property type="taxonomic scope" value="Eukaryota"/>
</dbReference>
<dbReference type="GeneTree" id="ENSGT00390000014889"/>
<dbReference type="HOGENOM" id="CLU_090677_0_0_1"/>
<dbReference type="InParanoid" id="Q0II29"/>
<dbReference type="OMA" id="TAHFDLC"/>
<dbReference type="OrthoDB" id="10072110at2759"/>
<dbReference type="TreeFam" id="TF333072"/>
<dbReference type="Proteomes" id="UP000009136">
    <property type="component" value="Chromosome 7"/>
</dbReference>
<dbReference type="Bgee" id="ENSBTAG00000012762">
    <property type="expression patterns" value="Expressed in occipital lobe and 110 other cell types or tissues"/>
</dbReference>
<dbReference type="InterPro" id="IPR040419">
    <property type="entry name" value="DUF5568"/>
</dbReference>
<dbReference type="PANTHER" id="PTHR31894">
    <property type="entry name" value="UPF0461 PROTEIN C5ORF24"/>
    <property type="match status" value="1"/>
</dbReference>
<dbReference type="PANTHER" id="PTHR31894:SF0">
    <property type="entry name" value="UPF0461 PROTEIN C5ORF24"/>
    <property type="match status" value="1"/>
</dbReference>
<dbReference type="Pfam" id="PF17724">
    <property type="entry name" value="DUF5568"/>
    <property type="match status" value="1"/>
</dbReference>